<dbReference type="EC" id="3.2.2.23" evidence="2"/>
<dbReference type="EC" id="4.2.99.18" evidence="2"/>
<dbReference type="EMBL" id="CP001139">
    <property type="protein sequence ID" value="ACH64866.1"/>
    <property type="molecule type" value="Genomic_DNA"/>
</dbReference>
<dbReference type="RefSeq" id="WP_012532671.1">
    <property type="nucleotide sequence ID" value="NC_011184.1"/>
</dbReference>
<dbReference type="SMR" id="B5FFG1"/>
<dbReference type="KEGG" id="vfm:VFMJ11_0128"/>
<dbReference type="HOGENOM" id="CLU_038423_1_1_6"/>
<dbReference type="Proteomes" id="UP000001857">
    <property type="component" value="Chromosome I"/>
</dbReference>
<dbReference type="GO" id="GO:0034039">
    <property type="term" value="F:8-oxo-7,8-dihydroguanine DNA N-glycosylase activity"/>
    <property type="evidence" value="ECO:0007669"/>
    <property type="project" value="TreeGrafter"/>
</dbReference>
<dbReference type="GO" id="GO:0140078">
    <property type="term" value="F:class I DNA-(apurinic or apyrimidinic site) endonuclease activity"/>
    <property type="evidence" value="ECO:0007669"/>
    <property type="project" value="UniProtKB-EC"/>
</dbReference>
<dbReference type="GO" id="GO:0003684">
    <property type="term" value="F:damaged DNA binding"/>
    <property type="evidence" value="ECO:0007669"/>
    <property type="project" value="InterPro"/>
</dbReference>
<dbReference type="GO" id="GO:0008270">
    <property type="term" value="F:zinc ion binding"/>
    <property type="evidence" value="ECO:0007669"/>
    <property type="project" value="UniProtKB-UniRule"/>
</dbReference>
<dbReference type="GO" id="GO:0006284">
    <property type="term" value="P:base-excision repair"/>
    <property type="evidence" value="ECO:0007669"/>
    <property type="project" value="InterPro"/>
</dbReference>
<dbReference type="CDD" id="cd08966">
    <property type="entry name" value="EcFpg-like_N"/>
    <property type="match status" value="1"/>
</dbReference>
<dbReference type="FunFam" id="1.10.8.50:FF:000003">
    <property type="entry name" value="Formamidopyrimidine-DNA glycosylase"/>
    <property type="match status" value="1"/>
</dbReference>
<dbReference type="FunFam" id="3.20.190.10:FF:000001">
    <property type="entry name" value="Formamidopyrimidine-DNA glycosylase"/>
    <property type="match status" value="1"/>
</dbReference>
<dbReference type="Gene3D" id="1.10.8.50">
    <property type="match status" value="1"/>
</dbReference>
<dbReference type="Gene3D" id="3.20.190.10">
    <property type="entry name" value="MutM-like, N-terminal"/>
    <property type="match status" value="1"/>
</dbReference>
<dbReference type="HAMAP" id="MF_00103">
    <property type="entry name" value="Fapy_DNA_glycosyl"/>
    <property type="match status" value="1"/>
</dbReference>
<dbReference type="InterPro" id="IPR015886">
    <property type="entry name" value="DNA_glyclase/AP_lyase_DNA-bd"/>
</dbReference>
<dbReference type="InterPro" id="IPR015887">
    <property type="entry name" value="DNA_glyclase_Znf_dom_DNA_BS"/>
</dbReference>
<dbReference type="InterPro" id="IPR020629">
    <property type="entry name" value="Formamido-pyr_DNA_Glyclase"/>
</dbReference>
<dbReference type="InterPro" id="IPR012319">
    <property type="entry name" value="FPG_cat"/>
</dbReference>
<dbReference type="InterPro" id="IPR035937">
    <property type="entry name" value="MutM-like_N-ter"/>
</dbReference>
<dbReference type="InterPro" id="IPR010979">
    <property type="entry name" value="Ribosomal_uS13-like_H2TH"/>
</dbReference>
<dbReference type="InterPro" id="IPR000214">
    <property type="entry name" value="Znf_DNA_glyclase/AP_lyase"/>
</dbReference>
<dbReference type="InterPro" id="IPR010663">
    <property type="entry name" value="Znf_FPG/IleRS"/>
</dbReference>
<dbReference type="NCBIfam" id="TIGR00577">
    <property type="entry name" value="fpg"/>
    <property type="match status" value="1"/>
</dbReference>
<dbReference type="NCBIfam" id="NF002211">
    <property type="entry name" value="PRK01103.1"/>
    <property type="match status" value="1"/>
</dbReference>
<dbReference type="PANTHER" id="PTHR22993">
    <property type="entry name" value="FORMAMIDOPYRIMIDINE-DNA GLYCOSYLASE"/>
    <property type="match status" value="1"/>
</dbReference>
<dbReference type="PANTHER" id="PTHR22993:SF9">
    <property type="entry name" value="FORMAMIDOPYRIMIDINE-DNA GLYCOSYLASE"/>
    <property type="match status" value="1"/>
</dbReference>
<dbReference type="Pfam" id="PF01149">
    <property type="entry name" value="Fapy_DNA_glyco"/>
    <property type="match status" value="1"/>
</dbReference>
<dbReference type="Pfam" id="PF06831">
    <property type="entry name" value="H2TH"/>
    <property type="match status" value="1"/>
</dbReference>
<dbReference type="Pfam" id="PF06827">
    <property type="entry name" value="zf-FPG_IleRS"/>
    <property type="match status" value="1"/>
</dbReference>
<dbReference type="SMART" id="SM00898">
    <property type="entry name" value="Fapy_DNA_glyco"/>
    <property type="match status" value="1"/>
</dbReference>
<dbReference type="SMART" id="SM01232">
    <property type="entry name" value="H2TH"/>
    <property type="match status" value="1"/>
</dbReference>
<dbReference type="SUPFAM" id="SSF57716">
    <property type="entry name" value="Glucocorticoid receptor-like (DNA-binding domain)"/>
    <property type="match status" value="1"/>
</dbReference>
<dbReference type="SUPFAM" id="SSF81624">
    <property type="entry name" value="N-terminal domain of MutM-like DNA repair proteins"/>
    <property type="match status" value="1"/>
</dbReference>
<dbReference type="SUPFAM" id="SSF46946">
    <property type="entry name" value="S13-like H2TH domain"/>
    <property type="match status" value="1"/>
</dbReference>
<dbReference type="PROSITE" id="PS51068">
    <property type="entry name" value="FPG_CAT"/>
    <property type="match status" value="1"/>
</dbReference>
<dbReference type="PROSITE" id="PS01242">
    <property type="entry name" value="ZF_FPG_1"/>
    <property type="match status" value="1"/>
</dbReference>
<dbReference type="PROSITE" id="PS51066">
    <property type="entry name" value="ZF_FPG_2"/>
    <property type="match status" value="1"/>
</dbReference>
<keyword id="KW-0227">DNA damage</keyword>
<keyword id="KW-0234">DNA repair</keyword>
<keyword id="KW-0238">DNA-binding</keyword>
<keyword id="KW-0326">Glycosidase</keyword>
<keyword id="KW-0378">Hydrolase</keyword>
<keyword id="KW-0456">Lyase</keyword>
<keyword id="KW-0479">Metal-binding</keyword>
<keyword id="KW-0511">Multifunctional enzyme</keyword>
<keyword id="KW-0862">Zinc</keyword>
<keyword id="KW-0863">Zinc-finger</keyword>
<evidence type="ECO:0000250" key="1"/>
<evidence type="ECO:0000255" key="2">
    <source>
        <dbReference type="HAMAP-Rule" id="MF_00103"/>
    </source>
</evidence>
<feature type="initiator methionine" description="Removed" evidence="1">
    <location>
        <position position="1"/>
    </location>
</feature>
<feature type="chain" id="PRO_1000094083" description="Formamidopyrimidine-DNA glycosylase">
    <location>
        <begin position="2"/>
        <end position="273"/>
    </location>
</feature>
<feature type="zinc finger region" description="FPG-type" evidence="2">
    <location>
        <begin position="235"/>
        <end position="269"/>
    </location>
</feature>
<feature type="active site" description="Schiff-base intermediate with DNA" evidence="2">
    <location>
        <position position="2"/>
    </location>
</feature>
<feature type="active site" description="Proton donor" evidence="2">
    <location>
        <position position="3"/>
    </location>
</feature>
<feature type="active site" description="Proton donor; for beta-elimination activity" evidence="2">
    <location>
        <position position="57"/>
    </location>
</feature>
<feature type="active site" description="Proton donor; for delta-elimination activity" evidence="2">
    <location>
        <position position="259"/>
    </location>
</feature>
<feature type="binding site" evidence="2">
    <location>
        <position position="90"/>
    </location>
    <ligand>
        <name>DNA</name>
        <dbReference type="ChEBI" id="CHEBI:16991"/>
    </ligand>
</feature>
<feature type="binding site" evidence="2">
    <location>
        <position position="109"/>
    </location>
    <ligand>
        <name>DNA</name>
        <dbReference type="ChEBI" id="CHEBI:16991"/>
    </ligand>
</feature>
<feature type="binding site" evidence="2">
    <location>
        <position position="150"/>
    </location>
    <ligand>
        <name>DNA</name>
        <dbReference type="ChEBI" id="CHEBI:16991"/>
    </ligand>
</feature>
<proteinExistence type="inferred from homology"/>
<protein>
    <recommendedName>
        <fullName evidence="2">Formamidopyrimidine-DNA glycosylase</fullName>
        <shortName evidence="2">Fapy-DNA glycosylase</shortName>
        <ecNumber evidence="2">3.2.2.23</ecNumber>
    </recommendedName>
    <alternativeName>
        <fullName evidence="2">DNA-(apurinic or apyrimidinic site) lyase MutM</fullName>
        <shortName evidence="2">AP lyase MutM</shortName>
        <ecNumber evidence="2">4.2.99.18</ecNumber>
    </alternativeName>
</protein>
<name>FPG_ALIFM</name>
<gene>
    <name evidence="2" type="primary">mutM</name>
    <name evidence="2" type="synonym">fpg</name>
    <name type="ordered locus">VFMJ11_0128</name>
</gene>
<reference key="1">
    <citation type="submission" date="2008-08" db="EMBL/GenBank/DDBJ databases">
        <title>Complete sequence of Vibrio fischeri strain MJ11.</title>
        <authorList>
            <person name="Mandel M.J."/>
            <person name="Stabb E.V."/>
            <person name="Ruby E.G."/>
            <person name="Ferriera S."/>
            <person name="Johnson J."/>
            <person name="Kravitz S."/>
            <person name="Beeson K."/>
            <person name="Sutton G."/>
            <person name="Rogers Y.-H."/>
            <person name="Friedman R."/>
            <person name="Frazier M."/>
            <person name="Venter J.C."/>
        </authorList>
    </citation>
    <scope>NUCLEOTIDE SEQUENCE [LARGE SCALE GENOMIC DNA]</scope>
    <source>
        <strain>MJ11</strain>
    </source>
</reference>
<comment type="function">
    <text evidence="2">Involved in base excision repair of DNA damaged by oxidation or by mutagenic agents. Acts as a DNA glycosylase that recognizes and removes damaged bases. Has a preference for oxidized purines, such as 7,8-dihydro-8-oxoguanine (8-oxoG). Has AP (apurinic/apyrimidinic) lyase activity and introduces nicks in the DNA strand. Cleaves the DNA backbone by beta-delta elimination to generate a single-strand break at the site of the removed base with both 3'- and 5'-phosphates.</text>
</comment>
<comment type="catalytic activity">
    <reaction evidence="2">
        <text>Hydrolysis of DNA containing ring-opened 7-methylguanine residues, releasing 2,6-diamino-4-hydroxy-5-(N-methyl)formamidopyrimidine.</text>
        <dbReference type="EC" id="3.2.2.23"/>
    </reaction>
</comment>
<comment type="catalytic activity">
    <reaction evidence="2">
        <text>2'-deoxyribonucleotide-(2'-deoxyribose 5'-phosphate)-2'-deoxyribonucleotide-DNA = a 3'-end 2'-deoxyribonucleotide-(2,3-dehydro-2,3-deoxyribose 5'-phosphate)-DNA + a 5'-end 5'-phospho-2'-deoxyribonucleoside-DNA + H(+)</text>
        <dbReference type="Rhea" id="RHEA:66592"/>
        <dbReference type="Rhea" id="RHEA-COMP:13180"/>
        <dbReference type="Rhea" id="RHEA-COMP:16897"/>
        <dbReference type="Rhea" id="RHEA-COMP:17067"/>
        <dbReference type="ChEBI" id="CHEBI:15378"/>
        <dbReference type="ChEBI" id="CHEBI:136412"/>
        <dbReference type="ChEBI" id="CHEBI:157695"/>
        <dbReference type="ChEBI" id="CHEBI:167181"/>
        <dbReference type="EC" id="4.2.99.18"/>
    </reaction>
</comment>
<comment type="cofactor">
    <cofactor evidence="2">
        <name>Zn(2+)</name>
        <dbReference type="ChEBI" id="CHEBI:29105"/>
    </cofactor>
    <text evidence="2">Binds 1 zinc ion per subunit.</text>
</comment>
<comment type="subunit">
    <text evidence="2">Monomer.</text>
</comment>
<comment type="similarity">
    <text evidence="2">Belongs to the FPG family.</text>
</comment>
<accession>B5FFG1</accession>
<organism>
    <name type="scientific">Aliivibrio fischeri (strain MJ11)</name>
    <name type="common">Vibrio fischeri</name>
    <dbReference type="NCBI Taxonomy" id="388396"/>
    <lineage>
        <taxon>Bacteria</taxon>
        <taxon>Pseudomonadati</taxon>
        <taxon>Pseudomonadota</taxon>
        <taxon>Gammaproteobacteria</taxon>
        <taxon>Vibrionales</taxon>
        <taxon>Vibrionaceae</taxon>
        <taxon>Aliivibrio</taxon>
    </lineage>
</organism>
<sequence>MPELPEVETSRLGITPHLQGQTIKAIVVRTDKLRWPIPQELQKLVGQRVQSIRRRAKYLMIDTPEGSAIIHLGMSGSLRVLDEEVPSAKHDHVDLVLENGKVLRYNDPRKFGAWLYSEVGVAHQVLSKLGPEPLTNEFNSEYFAEKAKNKKTVVKQFIMNNAVVVGVGNIYASESLFMAQIHPKTPVGSLKASQITVLVAEIKKVLETAIKQGGTTLKDFNQVDGKPGYFAQELKVYGRAGKECPVCSSKIEEEKIGQRNSFWCGKCQFLAED</sequence>